<sequence length="344" mass="39101">MINEDSIQLDTLLKKYYEHSIEKIVFADDNGKIIAMNDAAKDILSEEDNYSAVANAICHRCEGYTNAYDVQSCKDCFLESMQVQATNFQVFMKTKDQKVMPFTATYQLIDQDRGIHAFTLQNVSSQIEQQEKLHQQHMMRKTISAQENERKRISRELHDSVIQEMLNVDVQLRLLKYQEDTTKLLEDAENIEYIVAKLIDDIRNMSVELRPASLDDLGLEAAFKSYFKQFEENYGIKIIYTSNIKNTRFDSDIETVVYRVVQEAILNALKYADVNEINVGIRQTGRHLVAEVIDAGNGFDPSSKPKGSGLGLYGMNERAELVSGSVNIETKIGEGTNVTLNIPI</sequence>
<protein>
    <recommendedName>
        <fullName>Oxygen sensor histidine kinase NreB</fullName>
        <ecNumber>2.7.13.3</ecNumber>
    </recommendedName>
    <alternativeName>
        <fullName>Nitrogen regulation protein B</fullName>
    </alternativeName>
</protein>
<evidence type="ECO:0000250" key="1"/>
<evidence type="ECO:0000255" key="2"/>
<evidence type="ECO:0000255" key="3">
    <source>
        <dbReference type="PROSITE-ProRule" id="PRU00107"/>
    </source>
</evidence>
<evidence type="ECO:0000305" key="4"/>
<reference key="1">
    <citation type="journal article" date="2008" name="Antimicrob. Agents Chemother.">
        <title>Mutated response regulator graR is responsible for phenotypic conversion of Staphylococcus aureus from heterogeneous vancomycin-intermediate resistance to vancomycin-intermediate resistance.</title>
        <authorList>
            <person name="Neoh H.-M."/>
            <person name="Cui L."/>
            <person name="Yuzawa H."/>
            <person name="Takeuchi F."/>
            <person name="Matsuo M."/>
            <person name="Hiramatsu K."/>
        </authorList>
    </citation>
    <scope>NUCLEOTIDE SEQUENCE [LARGE SCALE GENOMIC DNA]</scope>
    <source>
        <strain>Mu3 / ATCC 700698</strain>
    </source>
</reference>
<gene>
    <name type="primary">nreB</name>
    <name type="ordered locus">SAHV_2376</name>
</gene>
<proteinExistence type="inferred from homology"/>
<feature type="chain" id="PRO_0000349330" description="Oxygen sensor histidine kinase NreB">
    <location>
        <begin position="1"/>
        <end position="344"/>
    </location>
</feature>
<feature type="domain" description="Histidine kinase" evidence="3">
    <location>
        <begin position="152"/>
        <end position="344"/>
    </location>
</feature>
<feature type="binding site" evidence="2">
    <location>
        <position position="58"/>
    </location>
    <ligand>
        <name>[4Fe-4S] cluster</name>
        <dbReference type="ChEBI" id="CHEBI:49883"/>
    </ligand>
</feature>
<feature type="binding site" evidence="2">
    <location>
        <position position="61"/>
    </location>
    <ligand>
        <name>[4Fe-4S] cluster</name>
        <dbReference type="ChEBI" id="CHEBI:49883"/>
    </ligand>
</feature>
<feature type="binding site" evidence="2">
    <location>
        <position position="73"/>
    </location>
    <ligand>
        <name>[4Fe-4S] cluster</name>
        <dbReference type="ChEBI" id="CHEBI:49883"/>
    </ligand>
</feature>
<feature type="binding site" evidence="2">
    <location>
        <position position="76"/>
    </location>
    <ligand>
        <name>[4Fe-4S] cluster</name>
        <dbReference type="ChEBI" id="CHEBI:49883"/>
    </ligand>
</feature>
<feature type="modified residue" description="Phosphohistidine; by autocatalysis" evidence="3">
    <location>
        <position position="158"/>
    </location>
</feature>
<dbReference type="EC" id="2.7.13.3"/>
<dbReference type="EMBL" id="AP009324">
    <property type="protein sequence ID" value="BAF79259.1"/>
    <property type="molecule type" value="Genomic_DNA"/>
</dbReference>
<dbReference type="RefSeq" id="WP_000606545.1">
    <property type="nucleotide sequence ID" value="NC_009782.1"/>
</dbReference>
<dbReference type="SMR" id="A7X624"/>
<dbReference type="KEGG" id="saw:SAHV_2376"/>
<dbReference type="HOGENOM" id="CLU_000445_114_0_9"/>
<dbReference type="GO" id="GO:0005737">
    <property type="term" value="C:cytoplasm"/>
    <property type="evidence" value="ECO:0007669"/>
    <property type="project" value="UniProtKB-SubCell"/>
</dbReference>
<dbReference type="GO" id="GO:0016020">
    <property type="term" value="C:membrane"/>
    <property type="evidence" value="ECO:0007669"/>
    <property type="project" value="InterPro"/>
</dbReference>
<dbReference type="GO" id="GO:0051539">
    <property type="term" value="F:4 iron, 4 sulfur cluster binding"/>
    <property type="evidence" value="ECO:0007669"/>
    <property type="project" value="UniProtKB-KW"/>
</dbReference>
<dbReference type="GO" id="GO:0005524">
    <property type="term" value="F:ATP binding"/>
    <property type="evidence" value="ECO:0007669"/>
    <property type="project" value="UniProtKB-KW"/>
</dbReference>
<dbReference type="GO" id="GO:0005506">
    <property type="term" value="F:iron ion binding"/>
    <property type="evidence" value="ECO:0007669"/>
    <property type="project" value="InterPro"/>
</dbReference>
<dbReference type="GO" id="GO:0000155">
    <property type="term" value="F:phosphorelay sensor kinase activity"/>
    <property type="evidence" value="ECO:0007669"/>
    <property type="project" value="InterPro"/>
</dbReference>
<dbReference type="GO" id="GO:0046983">
    <property type="term" value="F:protein dimerization activity"/>
    <property type="evidence" value="ECO:0007669"/>
    <property type="project" value="InterPro"/>
</dbReference>
<dbReference type="CDD" id="cd16917">
    <property type="entry name" value="HATPase_UhpB-NarQ-NarX-like"/>
    <property type="match status" value="1"/>
</dbReference>
<dbReference type="Gene3D" id="1.20.5.1930">
    <property type="match status" value="1"/>
</dbReference>
<dbReference type="Gene3D" id="3.30.565.10">
    <property type="entry name" value="Histidine kinase-like ATPase, C-terminal domain"/>
    <property type="match status" value="1"/>
</dbReference>
<dbReference type="InterPro" id="IPR036890">
    <property type="entry name" value="HATPase_C_sf"/>
</dbReference>
<dbReference type="InterPro" id="IPR005467">
    <property type="entry name" value="His_kinase_dom"/>
</dbReference>
<dbReference type="InterPro" id="IPR050482">
    <property type="entry name" value="Sensor_HK_TwoCompSys"/>
</dbReference>
<dbReference type="InterPro" id="IPR004358">
    <property type="entry name" value="Sig_transdc_His_kin-like_C"/>
</dbReference>
<dbReference type="InterPro" id="IPR011712">
    <property type="entry name" value="Sig_transdc_His_kin_sub3_dim/P"/>
</dbReference>
<dbReference type="InterPro" id="IPR017203">
    <property type="entry name" value="Sig_transdc_His_kinase_NreB"/>
</dbReference>
<dbReference type="PANTHER" id="PTHR24421">
    <property type="entry name" value="NITRATE/NITRITE SENSOR PROTEIN NARX-RELATED"/>
    <property type="match status" value="1"/>
</dbReference>
<dbReference type="PANTHER" id="PTHR24421:SF10">
    <property type="entry name" value="NITRATE_NITRITE SENSOR PROTEIN NARQ"/>
    <property type="match status" value="1"/>
</dbReference>
<dbReference type="Pfam" id="PF02518">
    <property type="entry name" value="HATPase_c"/>
    <property type="match status" value="1"/>
</dbReference>
<dbReference type="Pfam" id="PF07730">
    <property type="entry name" value="HisKA_3"/>
    <property type="match status" value="1"/>
</dbReference>
<dbReference type="PIRSF" id="PIRSF037432">
    <property type="entry name" value="STHK_NreB"/>
    <property type="match status" value="1"/>
</dbReference>
<dbReference type="PRINTS" id="PR00344">
    <property type="entry name" value="BCTRLSENSOR"/>
</dbReference>
<dbReference type="SMART" id="SM00387">
    <property type="entry name" value="HATPase_c"/>
    <property type="match status" value="1"/>
</dbReference>
<dbReference type="SUPFAM" id="SSF55874">
    <property type="entry name" value="ATPase domain of HSP90 chaperone/DNA topoisomerase II/histidine kinase"/>
    <property type="match status" value="1"/>
</dbReference>
<dbReference type="PROSITE" id="PS50109">
    <property type="entry name" value="HIS_KIN"/>
    <property type="match status" value="1"/>
</dbReference>
<comment type="function">
    <text evidence="1">Member of the two-component regulatory system NreB/NreC involved in the control of dissimilatory nitrate/nitrite reduction in response to oxygen. NreB functions as a direct oxygen sensor histidine kinase which is autophosphorylated, in the absence of oxygen, probably at the conserved histidine residue, and transfers its phosphate group probably to a conserved aspartate residue of NreC. NreB/NreC activates the expression of the nitrate (narGHJI) and nitrite (nir) reductase operons, as well as the putative nitrate transporter gene narT (By similarity).</text>
</comment>
<comment type="catalytic activity">
    <reaction>
        <text>ATP + protein L-histidine = ADP + protein N-phospho-L-histidine.</text>
        <dbReference type="EC" id="2.7.13.3"/>
    </reaction>
</comment>
<comment type="cofactor">
    <cofactor evidence="4">
        <name>[4Fe-4S] cluster</name>
        <dbReference type="ChEBI" id="CHEBI:49883"/>
    </cofactor>
    <text evidence="4">Binds 1 [4Fe-4S] cluster.</text>
</comment>
<comment type="subcellular location">
    <subcellularLocation>
        <location evidence="4">Cytoplasm</location>
    </subcellularLocation>
</comment>
<comment type="PTM">
    <text evidence="1">Autophosphorylated.</text>
</comment>
<name>NREB_STAA1</name>
<organism>
    <name type="scientific">Staphylococcus aureus (strain Mu3 / ATCC 700698)</name>
    <dbReference type="NCBI Taxonomy" id="418127"/>
    <lineage>
        <taxon>Bacteria</taxon>
        <taxon>Bacillati</taxon>
        <taxon>Bacillota</taxon>
        <taxon>Bacilli</taxon>
        <taxon>Bacillales</taxon>
        <taxon>Staphylococcaceae</taxon>
        <taxon>Staphylococcus</taxon>
    </lineage>
</organism>
<accession>A7X624</accession>
<keyword id="KW-0004">4Fe-4S</keyword>
<keyword id="KW-0067">ATP-binding</keyword>
<keyword id="KW-0963">Cytoplasm</keyword>
<keyword id="KW-0408">Iron</keyword>
<keyword id="KW-0411">Iron-sulfur</keyword>
<keyword id="KW-0418">Kinase</keyword>
<keyword id="KW-0479">Metal-binding</keyword>
<keyword id="KW-0547">Nucleotide-binding</keyword>
<keyword id="KW-0597">Phosphoprotein</keyword>
<keyword id="KW-0808">Transferase</keyword>
<keyword id="KW-0902">Two-component regulatory system</keyword>